<protein>
    <recommendedName>
        <fullName>Copper transport protein ATOX1 homolog</fullName>
    </recommendedName>
</protein>
<proteinExistence type="inferred from homology"/>
<evidence type="ECO:0000250" key="1"/>
<evidence type="ECO:0000255" key="2">
    <source>
        <dbReference type="PROSITE-ProRule" id="PRU00280"/>
    </source>
</evidence>
<evidence type="ECO:0000305" key="3"/>
<keyword id="KW-0143">Chaperone</keyword>
<keyword id="KW-0186">Copper</keyword>
<keyword id="KW-0187">Copper transport</keyword>
<keyword id="KW-0406">Ion transport</keyword>
<keyword id="KW-0479">Metal-binding</keyword>
<keyword id="KW-1185">Reference proteome</keyword>
<keyword id="KW-0813">Transport</keyword>
<sequence length="67" mass="7206">MTYSFFVDMTCGGCSKAVNAILSKIDGVSNIQIDLENKKVSCESSKMGADELLKNIQKTGKKCSIIA</sequence>
<reference key="1">
    <citation type="journal article" date="2005" name="Nature">
        <title>The genome of the social amoeba Dictyostelium discoideum.</title>
        <authorList>
            <person name="Eichinger L."/>
            <person name="Pachebat J.A."/>
            <person name="Gloeckner G."/>
            <person name="Rajandream M.A."/>
            <person name="Sucgang R."/>
            <person name="Berriman M."/>
            <person name="Song J."/>
            <person name="Olsen R."/>
            <person name="Szafranski K."/>
            <person name="Xu Q."/>
            <person name="Tunggal B."/>
            <person name="Kummerfeld S."/>
            <person name="Madera M."/>
            <person name="Konfortov B.A."/>
            <person name="Rivero F."/>
            <person name="Bankier A.T."/>
            <person name="Lehmann R."/>
            <person name="Hamlin N."/>
            <person name="Davies R."/>
            <person name="Gaudet P."/>
            <person name="Fey P."/>
            <person name="Pilcher K."/>
            <person name="Chen G."/>
            <person name="Saunders D."/>
            <person name="Sodergren E.J."/>
            <person name="Davis P."/>
            <person name="Kerhornou A."/>
            <person name="Nie X."/>
            <person name="Hall N."/>
            <person name="Anjard C."/>
            <person name="Hemphill L."/>
            <person name="Bason N."/>
            <person name="Farbrother P."/>
            <person name="Desany B."/>
            <person name="Just E."/>
            <person name="Morio T."/>
            <person name="Rost R."/>
            <person name="Churcher C.M."/>
            <person name="Cooper J."/>
            <person name="Haydock S."/>
            <person name="van Driessche N."/>
            <person name="Cronin A."/>
            <person name="Goodhead I."/>
            <person name="Muzny D.M."/>
            <person name="Mourier T."/>
            <person name="Pain A."/>
            <person name="Lu M."/>
            <person name="Harper D."/>
            <person name="Lindsay R."/>
            <person name="Hauser H."/>
            <person name="James K.D."/>
            <person name="Quiles M."/>
            <person name="Madan Babu M."/>
            <person name="Saito T."/>
            <person name="Buchrieser C."/>
            <person name="Wardroper A."/>
            <person name="Felder M."/>
            <person name="Thangavelu M."/>
            <person name="Johnson D."/>
            <person name="Knights A."/>
            <person name="Loulseged H."/>
            <person name="Mungall K.L."/>
            <person name="Oliver K."/>
            <person name="Price C."/>
            <person name="Quail M.A."/>
            <person name="Urushihara H."/>
            <person name="Hernandez J."/>
            <person name="Rabbinowitsch E."/>
            <person name="Steffen D."/>
            <person name="Sanders M."/>
            <person name="Ma J."/>
            <person name="Kohara Y."/>
            <person name="Sharp S."/>
            <person name="Simmonds M.N."/>
            <person name="Spiegler S."/>
            <person name="Tivey A."/>
            <person name="Sugano S."/>
            <person name="White B."/>
            <person name="Walker D."/>
            <person name="Woodward J.R."/>
            <person name="Winckler T."/>
            <person name="Tanaka Y."/>
            <person name="Shaulsky G."/>
            <person name="Schleicher M."/>
            <person name="Weinstock G.M."/>
            <person name="Rosenthal A."/>
            <person name="Cox E.C."/>
            <person name="Chisholm R.L."/>
            <person name="Gibbs R.A."/>
            <person name="Loomis W.F."/>
            <person name="Platzer M."/>
            <person name="Kay R.R."/>
            <person name="Williams J.G."/>
            <person name="Dear P.H."/>
            <person name="Noegel A.A."/>
            <person name="Barrell B.G."/>
            <person name="Kuspa A."/>
        </authorList>
    </citation>
    <scope>NUCLEOTIDE SEQUENCE [LARGE SCALE GENOMIC DNA]</scope>
    <source>
        <strain>AX4</strain>
    </source>
</reference>
<comment type="function">
    <text evidence="1">Could bind and deliver cytosolic copper to the copper ATPase proteins. May be important in cellular antioxidant defense (By similarity).</text>
</comment>
<comment type="similarity">
    <text evidence="3">Belongs to the ATX1 family.</text>
</comment>
<dbReference type="EMBL" id="AAFI02000064">
    <property type="protein sequence ID" value="EAL65299.2"/>
    <property type="molecule type" value="Genomic_DNA"/>
</dbReference>
<dbReference type="RefSeq" id="XP_638653.2">
    <property type="nucleotide sequence ID" value="XM_633561.2"/>
</dbReference>
<dbReference type="SMR" id="Q54PZ2"/>
<dbReference type="FunCoup" id="Q54PZ2">
    <property type="interactions" value="265"/>
</dbReference>
<dbReference type="STRING" id="44689.Q54PZ2"/>
<dbReference type="PaxDb" id="44689-DDB0266724"/>
<dbReference type="EnsemblProtists" id="EAL65299">
    <property type="protein sequence ID" value="EAL65299"/>
    <property type="gene ID" value="DDB_G0284221"/>
</dbReference>
<dbReference type="GeneID" id="8624483"/>
<dbReference type="KEGG" id="ddi:DDB_G0284221"/>
<dbReference type="dictyBase" id="DDB_G0284221">
    <property type="gene designation" value="atox1"/>
</dbReference>
<dbReference type="VEuPathDB" id="AmoebaDB:DDB_G0284221"/>
<dbReference type="eggNOG" id="ENOG502SBXZ">
    <property type="taxonomic scope" value="Eukaryota"/>
</dbReference>
<dbReference type="HOGENOM" id="CLU_134973_3_1_1"/>
<dbReference type="InParanoid" id="Q54PZ2"/>
<dbReference type="OMA" id="MTHTYKF"/>
<dbReference type="PhylomeDB" id="Q54PZ2"/>
<dbReference type="PRO" id="PR:Q54PZ2"/>
<dbReference type="Proteomes" id="UP000002195">
    <property type="component" value="Chromosome 4"/>
</dbReference>
<dbReference type="GO" id="GO:0005829">
    <property type="term" value="C:cytosol"/>
    <property type="evidence" value="ECO:0000318"/>
    <property type="project" value="GO_Central"/>
</dbReference>
<dbReference type="GO" id="GO:0016531">
    <property type="term" value="F:copper chaperone activity"/>
    <property type="evidence" value="ECO:0000250"/>
    <property type="project" value="dictyBase"/>
</dbReference>
<dbReference type="GO" id="GO:0032767">
    <property type="term" value="F:copper-dependent protein binding"/>
    <property type="evidence" value="ECO:0000250"/>
    <property type="project" value="dictyBase"/>
</dbReference>
<dbReference type="GO" id="GO:0046872">
    <property type="term" value="F:metal ion binding"/>
    <property type="evidence" value="ECO:0007669"/>
    <property type="project" value="UniProtKB-KW"/>
</dbReference>
<dbReference type="GO" id="GO:0006825">
    <property type="term" value="P:copper ion transport"/>
    <property type="evidence" value="ECO:0000250"/>
    <property type="project" value="dictyBase"/>
</dbReference>
<dbReference type="CDD" id="cd00371">
    <property type="entry name" value="HMA"/>
    <property type="match status" value="1"/>
</dbReference>
<dbReference type="FunFam" id="3.30.70.100:FF:000008">
    <property type="entry name" value="Copper transport protein ATOX1"/>
    <property type="match status" value="1"/>
</dbReference>
<dbReference type="Gene3D" id="3.30.70.100">
    <property type="match status" value="1"/>
</dbReference>
<dbReference type="InterPro" id="IPR051881">
    <property type="entry name" value="Copper_transport_ATOX1-like"/>
</dbReference>
<dbReference type="InterPro" id="IPR006121">
    <property type="entry name" value="HMA_dom"/>
</dbReference>
<dbReference type="InterPro" id="IPR036163">
    <property type="entry name" value="HMA_dom_sf"/>
</dbReference>
<dbReference type="PANTHER" id="PTHR46365">
    <property type="entry name" value="COPPER TRANSPORT PROTEIN ATOX1"/>
    <property type="match status" value="1"/>
</dbReference>
<dbReference type="PANTHER" id="PTHR46365:SF1">
    <property type="entry name" value="COPPER TRANSPORT PROTEIN ATOX1"/>
    <property type="match status" value="1"/>
</dbReference>
<dbReference type="Pfam" id="PF00403">
    <property type="entry name" value="HMA"/>
    <property type="match status" value="1"/>
</dbReference>
<dbReference type="SUPFAM" id="SSF55008">
    <property type="entry name" value="HMA, heavy metal-associated domain"/>
    <property type="match status" value="1"/>
</dbReference>
<dbReference type="PROSITE" id="PS50846">
    <property type="entry name" value="HMA_2"/>
    <property type="match status" value="1"/>
</dbReference>
<organism>
    <name type="scientific">Dictyostelium discoideum</name>
    <name type="common">Social amoeba</name>
    <dbReference type="NCBI Taxonomy" id="44689"/>
    <lineage>
        <taxon>Eukaryota</taxon>
        <taxon>Amoebozoa</taxon>
        <taxon>Evosea</taxon>
        <taxon>Eumycetozoa</taxon>
        <taxon>Dictyostelia</taxon>
        <taxon>Dictyosteliales</taxon>
        <taxon>Dictyosteliaceae</taxon>
        <taxon>Dictyostelium</taxon>
    </lineage>
</organism>
<feature type="chain" id="PRO_0000331119" description="Copper transport protein ATOX1 homolog">
    <location>
        <begin position="1"/>
        <end position="67"/>
    </location>
</feature>
<feature type="domain" description="HMA" evidence="2">
    <location>
        <begin position="1"/>
        <end position="64"/>
    </location>
</feature>
<feature type="binding site" evidence="2">
    <location>
        <position position="11"/>
    </location>
    <ligand>
        <name>Cu cation</name>
        <dbReference type="ChEBI" id="CHEBI:23378"/>
    </ligand>
</feature>
<feature type="binding site" evidence="2">
    <location>
        <position position="14"/>
    </location>
    <ligand>
        <name>Cu cation</name>
        <dbReference type="ChEBI" id="CHEBI:23378"/>
    </ligand>
</feature>
<accession>Q54PZ2</accession>
<gene>
    <name type="primary">atox1</name>
    <name type="ORF">DDB_G0284221</name>
</gene>
<name>ATOX1_DICDI</name>